<sequence length="525" mass="59049">MKVLTTALLLVTLQCSHALSPTNCDASKPLAEKVLDLINKGRRSGYTFQLLRVSDAHLDRVETATIYYLVLDVVESDCWVLSTKAQDECLPAMRTSEVVIGQCKVIATRYSNESQDLSVNGYNCTMRSVSSAYINTKDSPVLVDSFEDSEPYRKLARKALDKYKAENGDFASFRVERAERVIRMRGGERTSYFIEFSVRNCSTQHFPRHPPVFGLCRVVLTYSTEASDLETPEYTDLICEVFNTEDLKNRSDMKPHRGHEHPHCDKHLCKLSGPRDHHHTHKTHEIGCPPPPEGKDNSDRPPLQEGALPQMLPGHSGPSGTNRSHRPPHNHSCNEHPCHGQHPHGHHPHGQHPHGHHPHGQHPHGHHPHGQHPHGHHPHGQHPHGHHPHGHHPHGDHPHGHHPHGHDFLDYGPCDPPSNSQELKGQYHRGHGPPHGHSRKRGPGKGLFPFHQRQIGYVYRLPPLNVGEVLTPPEANFPIFSLPNCNRPPQPEIRPFPQTASKSCPGKFEGKFPQVSNFFEHTPPK</sequence>
<name>HRG_RAT</name>
<dbReference type="EMBL" id="AF194029">
    <property type="protein sequence ID" value="AAG28417.1"/>
    <property type="molecule type" value="mRNA"/>
</dbReference>
<dbReference type="EMBL" id="AB055895">
    <property type="protein sequence ID" value="BAB33092.1"/>
    <property type="molecule type" value="mRNA"/>
</dbReference>
<dbReference type="EMBL" id="AB055896">
    <property type="protein sequence ID" value="BAB33093.1"/>
    <property type="molecule type" value="mRNA"/>
</dbReference>
<dbReference type="EMBL" id="BC089779">
    <property type="protein sequence ID" value="AAH89779.1"/>
    <property type="molecule type" value="mRNA"/>
</dbReference>
<dbReference type="RefSeq" id="NP_001316829.1">
    <property type="nucleotide sequence ID" value="NM_001329900.1"/>
</dbReference>
<dbReference type="RefSeq" id="NP_596919.1">
    <property type="nucleotide sequence ID" value="NM_133428.2"/>
</dbReference>
<dbReference type="SMR" id="Q99PS8"/>
<dbReference type="FunCoup" id="Q99PS8">
    <property type="interactions" value="174"/>
</dbReference>
<dbReference type="IntAct" id="Q99PS8">
    <property type="interactions" value="6"/>
</dbReference>
<dbReference type="STRING" id="10116.ENSRNOP00000072623"/>
<dbReference type="MEROPS" id="I25.022"/>
<dbReference type="MEROPS" id="I25.025"/>
<dbReference type="GlyCosmos" id="Q99PS8">
    <property type="glycosylation" value="5 sites, No reported glycans"/>
</dbReference>
<dbReference type="GlyGen" id="Q99PS8">
    <property type="glycosylation" value="5 sites"/>
</dbReference>
<dbReference type="iPTMnet" id="Q99PS8"/>
<dbReference type="PhosphoSitePlus" id="Q99PS8"/>
<dbReference type="PaxDb" id="10116-ENSRNOP00000049290"/>
<dbReference type="GeneID" id="171016"/>
<dbReference type="GeneID" id="681544"/>
<dbReference type="KEGG" id="rno:171016"/>
<dbReference type="KEGG" id="rno:681544"/>
<dbReference type="AGR" id="RGD:1594092"/>
<dbReference type="AGR" id="RGD:619808"/>
<dbReference type="CTD" id="3273"/>
<dbReference type="CTD" id="681544"/>
<dbReference type="RGD" id="619808">
    <property type="gene designation" value="Hrg"/>
</dbReference>
<dbReference type="eggNOG" id="ENOG502S50D">
    <property type="taxonomic scope" value="Eukaryota"/>
</dbReference>
<dbReference type="HOGENOM" id="CLU_575637_0_0_1"/>
<dbReference type="InParanoid" id="Q99PS8"/>
<dbReference type="OrthoDB" id="78357at9989"/>
<dbReference type="PhylomeDB" id="Q99PS8"/>
<dbReference type="TreeFam" id="TF333729"/>
<dbReference type="Reactome" id="R-RNO-114608">
    <property type="pathway name" value="Platelet degranulation"/>
</dbReference>
<dbReference type="Reactome" id="R-RNO-75205">
    <property type="pathway name" value="Dissolution of Fibrin Clot"/>
</dbReference>
<dbReference type="PRO" id="PR:Q99PS8"/>
<dbReference type="Proteomes" id="UP000002494">
    <property type="component" value="Chromosome 11"/>
</dbReference>
<dbReference type="Bgee" id="ENSRNOG00000001809">
    <property type="expression patterns" value="Expressed in liver and 14 other cell types or tissues"/>
</dbReference>
<dbReference type="ExpressionAtlas" id="Q99PS8">
    <property type="expression patterns" value="baseline and differential"/>
</dbReference>
<dbReference type="GO" id="GO:0009986">
    <property type="term" value="C:cell surface"/>
    <property type="evidence" value="ECO:0000266"/>
    <property type="project" value="RGD"/>
</dbReference>
<dbReference type="GO" id="GO:0005576">
    <property type="term" value="C:extracellular region"/>
    <property type="evidence" value="ECO:0000266"/>
    <property type="project" value="RGD"/>
</dbReference>
<dbReference type="GO" id="GO:0004869">
    <property type="term" value="F:cysteine-type endopeptidase inhibitor activity"/>
    <property type="evidence" value="ECO:0007669"/>
    <property type="project" value="InterPro"/>
</dbReference>
<dbReference type="GO" id="GO:0020037">
    <property type="term" value="F:heme binding"/>
    <property type="evidence" value="ECO:0000250"/>
    <property type="project" value="UniProtKB"/>
</dbReference>
<dbReference type="GO" id="GO:0043395">
    <property type="term" value="F:heparan sulfate proteoglycan binding"/>
    <property type="evidence" value="ECO:0000250"/>
    <property type="project" value="UniProtKB"/>
</dbReference>
<dbReference type="GO" id="GO:0008201">
    <property type="term" value="F:heparin binding"/>
    <property type="evidence" value="ECO:0000250"/>
    <property type="project" value="UniProtKB"/>
</dbReference>
<dbReference type="GO" id="GO:0019865">
    <property type="term" value="F:immunoglobulin binding"/>
    <property type="evidence" value="ECO:0000250"/>
    <property type="project" value="UniProtKB"/>
</dbReference>
<dbReference type="GO" id="GO:0046872">
    <property type="term" value="F:metal ion binding"/>
    <property type="evidence" value="ECO:0000250"/>
    <property type="project" value="UniProtKB"/>
</dbReference>
<dbReference type="GO" id="GO:0004867">
    <property type="term" value="F:serine-type endopeptidase inhibitor activity"/>
    <property type="evidence" value="ECO:0000266"/>
    <property type="project" value="RGD"/>
</dbReference>
<dbReference type="GO" id="GO:0005102">
    <property type="term" value="F:signaling receptor binding"/>
    <property type="evidence" value="ECO:0000250"/>
    <property type="project" value="UniProtKB"/>
</dbReference>
<dbReference type="GO" id="GO:0008270">
    <property type="term" value="F:zinc ion binding"/>
    <property type="evidence" value="ECO:0000250"/>
    <property type="project" value="UniProtKB"/>
</dbReference>
<dbReference type="GO" id="GO:0061844">
    <property type="term" value="P:antimicrobial humoral immune response mediated by antimicrobial peptide"/>
    <property type="evidence" value="ECO:0000266"/>
    <property type="project" value="RGD"/>
</dbReference>
<dbReference type="GO" id="GO:0050832">
    <property type="term" value="P:defense response to fungus"/>
    <property type="evidence" value="ECO:0000250"/>
    <property type="project" value="UniProtKB"/>
</dbReference>
<dbReference type="GO" id="GO:0042730">
    <property type="term" value="P:fibrinolysis"/>
    <property type="evidence" value="ECO:0000266"/>
    <property type="project" value="RGD"/>
</dbReference>
<dbReference type="GO" id="GO:0016525">
    <property type="term" value="P:negative regulation of angiogenesis"/>
    <property type="evidence" value="ECO:0000250"/>
    <property type="project" value="UniProtKB"/>
</dbReference>
<dbReference type="GO" id="GO:0043537">
    <property type="term" value="P:negative regulation of blood vessel endothelial cell migration"/>
    <property type="evidence" value="ECO:0000250"/>
    <property type="project" value="UniProtKB"/>
</dbReference>
<dbReference type="GO" id="GO:0007162">
    <property type="term" value="P:negative regulation of cell adhesion"/>
    <property type="evidence" value="ECO:0000250"/>
    <property type="project" value="UniProtKB"/>
</dbReference>
<dbReference type="GO" id="GO:0033629">
    <property type="term" value="P:negative regulation of cell adhesion mediated by integrin"/>
    <property type="evidence" value="ECO:0000250"/>
    <property type="project" value="UniProtKB"/>
</dbReference>
<dbReference type="GO" id="GO:0030308">
    <property type="term" value="P:negative regulation of cell growth"/>
    <property type="evidence" value="ECO:0000250"/>
    <property type="project" value="UniProtKB"/>
</dbReference>
<dbReference type="GO" id="GO:0008285">
    <property type="term" value="P:negative regulation of cell population proliferation"/>
    <property type="evidence" value="ECO:0000250"/>
    <property type="project" value="UniProtKB"/>
</dbReference>
<dbReference type="GO" id="GO:2001027">
    <property type="term" value="P:negative regulation of endothelial cell chemotaxis"/>
    <property type="evidence" value="ECO:0000250"/>
    <property type="project" value="UniProtKB"/>
</dbReference>
<dbReference type="GO" id="GO:0051918">
    <property type="term" value="P:negative regulation of fibrinolysis"/>
    <property type="evidence" value="ECO:0000266"/>
    <property type="project" value="RGD"/>
</dbReference>
<dbReference type="GO" id="GO:0010593">
    <property type="term" value="P:negative regulation of lamellipodium assembly"/>
    <property type="evidence" value="ECO:0000250"/>
    <property type="project" value="UniProtKB"/>
</dbReference>
<dbReference type="GO" id="GO:1900747">
    <property type="term" value="P:negative regulation of vascular endothelial growth factor signaling pathway"/>
    <property type="evidence" value="ECO:0000250"/>
    <property type="project" value="UniProtKB"/>
</dbReference>
<dbReference type="GO" id="GO:0030168">
    <property type="term" value="P:platelet activation"/>
    <property type="evidence" value="ECO:0000250"/>
    <property type="project" value="UniProtKB"/>
</dbReference>
<dbReference type="GO" id="GO:0043065">
    <property type="term" value="P:positive regulation of apoptotic process"/>
    <property type="evidence" value="ECO:0000250"/>
    <property type="project" value="UniProtKB"/>
</dbReference>
<dbReference type="GO" id="GO:2000504">
    <property type="term" value="P:positive regulation of blood vessel remodeling"/>
    <property type="evidence" value="ECO:0000250"/>
    <property type="project" value="UniProtKB"/>
</dbReference>
<dbReference type="GO" id="GO:0051894">
    <property type="term" value="P:positive regulation of focal adhesion assembly"/>
    <property type="evidence" value="ECO:0000250"/>
    <property type="project" value="UniProtKB"/>
</dbReference>
<dbReference type="GO" id="GO:0002839">
    <property type="term" value="P:positive regulation of immune response to tumor cell"/>
    <property type="evidence" value="ECO:0000250"/>
    <property type="project" value="UniProtKB"/>
</dbReference>
<dbReference type="GO" id="GO:0032956">
    <property type="term" value="P:regulation of actin cytoskeleton organization"/>
    <property type="evidence" value="ECO:0000250"/>
    <property type="project" value="UniProtKB"/>
</dbReference>
<dbReference type="GO" id="GO:0030193">
    <property type="term" value="P:regulation of blood coagulation"/>
    <property type="evidence" value="ECO:0000250"/>
    <property type="project" value="UniProtKB"/>
</dbReference>
<dbReference type="GO" id="GO:0010468">
    <property type="term" value="P:regulation of gene expression"/>
    <property type="evidence" value="ECO:0000250"/>
    <property type="project" value="UniProtKB"/>
</dbReference>
<dbReference type="GO" id="GO:0050730">
    <property type="term" value="P:regulation of peptidyl-tyrosine phosphorylation"/>
    <property type="evidence" value="ECO:0000250"/>
    <property type="project" value="UniProtKB"/>
</dbReference>
<dbReference type="GO" id="GO:0010543">
    <property type="term" value="P:regulation of platelet activation"/>
    <property type="evidence" value="ECO:0000250"/>
    <property type="project" value="UniProtKB"/>
</dbReference>
<dbReference type="GO" id="GO:0043254">
    <property type="term" value="P:regulation of protein-containing complex assembly"/>
    <property type="evidence" value="ECO:0000250"/>
    <property type="project" value="UniProtKB"/>
</dbReference>
<dbReference type="CDD" id="cd00042">
    <property type="entry name" value="CY"/>
    <property type="match status" value="1"/>
</dbReference>
<dbReference type="FunFam" id="3.10.450.10:FF:000005">
    <property type="entry name" value="Histidine-rich glycoprotein"/>
    <property type="match status" value="1"/>
</dbReference>
<dbReference type="FunFam" id="3.10.450.10:FF:000015">
    <property type="entry name" value="Histidine-rich glycoprotein"/>
    <property type="match status" value="1"/>
</dbReference>
<dbReference type="Gene3D" id="3.10.450.10">
    <property type="match status" value="2"/>
</dbReference>
<dbReference type="InterPro" id="IPR000010">
    <property type="entry name" value="Cystatin_dom"/>
</dbReference>
<dbReference type="InterPro" id="IPR046350">
    <property type="entry name" value="Cystatin_sf"/>
</dbReference>
<dbReference type="InterPro" id="IPR050735">
    <property type="entry name" value="Kininogen_Fetuin_HRG"/>
</dbReference>
<dbReference type="PANTHER" id="PTHR13814">
    <property type="entry name" value="FETUIN"/>
    <property type="match status" value="1"/>
</dbReference>
<dbReference type="PANTHER" id="PTHR13814:SF3">
    <property type="entry name" value="HISTIDINE-RICH GLYCOPROTEIN"/>
    <property type="match status" value="1"/>
</dbReference>
<dbReference type="SMART" id="SM00043">
    <property type="entry name" value="CY"/>
    <property type="match status" value="2"/>
</dbReference>
<dbReference type="SUPFAM" id="SSF54403">
    <property type="entry name" value="Cystatin/monellin"/>
    <property type="match status" value="1"/>
</dbReference>
<gene>
    <name type="primary">Hrg</name>
    <name type="synonym">Hrg1</name>
</gene>
<keyword id="KW-0094">Blood coagulation</keyword>
<keyword id="KW-0165">Cleavage on pair of basic residues</keyword>
<keyword id="KW-0186">Copper</keyword>
<keyword id="KW-1015">Disulfide bond</keyword>
<keyword id="KW-0280">Fibrinolysis</keyword>
<keyword id="KW-0325">Glycoprotein</keyword>
<keyword id="KW-0356">Hemostasis</keyword>
<keyword id="KW-0358">Heparin-binding</keyword>
<keyword id="KW-0479">Metal-binding</keyword>
<keyword id="KW-0597">Phosphoprotein</keyword>
<keyword id="KW-1185">Reference proteome</keyword>
<keyword id="KW-0677">Repeat</keyword>
<keyword id="KW-0964">Secreted</keyword>
<keyword id="KW-0732">Signal</keyword>
<keyword id="KW-0862">Zinc</keyword>
<proteinExistence type="evidence at protein level"/>
<accession>Q99PS8</accession>
<accession>D3ZJN0</accession>
<accession>Q99PS7</accession>
<accession>Q9ESB2</accession>
<evidence type="ECO:0000250" key="1"/>
<evidence type="ECO:0000255" key="2"/>
<evidence type="ECO:0000256" key="3">
    <source>
        <dbReference type="SAM" id="MobiDB-lite"/>
    </source>
</evidence>
<evidence type="ECO:0000269" key="4">
    <source>
    </source>
</evidence>
<evidence type="ECO:0000305" key="5"/>
<evidence type="ECO:0007744" key="6">
    <source>
    </source>
</evidence>
<feature type="signal peptide" evidence="2">
    <location>
        <begin position="1"/>
        <end position="18"/>
    </location>
</feature>
<feature type="chain" id="PRO_0000408508" description="Histidine-rich glycoprotein">
    <location>
        <begin position="19"/>
        <end position="525"/>
    </location>
</feature>
<feature type="domain" description="Cystatin 1">
    <location>
        <begin position="19"/>
        <end position="122"/>
    </location>
</feature>
<feature type="domain" description="Cystatin 2">
    <location>
        <begin position="135"/>
        <end position="240"/>
    </location>
</feature>
<feature type="region of interest" description="Interaction with ATP5F1A" evidence="1">
    <location>
        <begin position="41"/>
        <end position="84"/>
    </location>
</feature>
<feature type="region of interest" description="Disordered" evidence="3">
    <location>
        <begin position="275"/>
        <end position="445"/>
    </location>
</feature>
<feature type="compositionally biased region" description="Basic residues" evidence="3">
    <location>
        <begin position="339"/>
        <end position="392"/>
    </location>
</feature>
<feature type="compositionally biased region" description="Basic residues" evidence="3">
    <location>
        <begin position="426"/>
        <end position="443"/>
    </location>
</feature>
<feature type="site" description="Cleavage; by plasmin" evidence="1">
    <location>
        <begin position="439"/>
        <end position="440"/>
    </location>
</feature>
<feature type="modified residue" description="Phosphoserine" evidence="6">
    <location>
        <position position="145"/>
    </location>
</feature>
<feature type="modified residue" description="Phosphoserine" evidence="6">
    <location>
        <position position="438"/>
    </location>
</feature>
<feature type="glycosylation site" description="N-linked (GlcNAc...) asparagine" evidence="2">
    <location>
        <position position="112"/>
    </location>
</feature>
<feature type="glycosylation site" description="N-linked (GlcNAc...) asparagine" evidence="2">
    <location>
        <position position="123"/>
    </location>
</feature>
<feature type="glycosylation site" description="N-linked (GlcNAc...) asparagine" evidence="2">
    <location>
        <position position="200"/>
    </location>
</feature>
<feature type="glycosylation site" description="N-linked (GlcNAc...) asparagine" evidence="2">
    <location>
        <position position="322"/>
    </location>
</feature>
<feature type="glycosylation site" description="N-linked (GlcNAc...) asparagine" evidence="2">
    <location>
        <position position="330"/>
    </location>
</feature>
<feature type="disulfide bond" evidence="1">
    <location>
        <begin position="24"/>
        <end position="504"/>
    </location>
</feature>
<feature type="disulfide bond" evidence="1">
    <location>
        <begin position="78"/>
        <end position="89"/>
    </location>
</feature>
<feature type="disulfide bond" evidence="1">
    <location>
        <begin position="103"/>
        <end position="124"/>
    </location>
</feature>
<feature type="disulfide bond" evidence="1">
    <location>
        <begin position="201"/>
        <end position="414"/>
    </location>
</feature>
<feature type="disulfide bond" evidence="1">
    <location>
        <begin position="216"/>
        <end position="239"/>
    </location>
</feature>
<feature type="sequence conflict" description="In Ref. 1; AAG28417." evidence="5" ref="1">
    <original>T</original>
    <variation>A</variation>
    <location>
        <position position="6"/>
    </location>
</feature>
<feature type="sequence conflict" description="In Ref. 1; AAG28417 and 2; BAB33093." evidence="5" ref="1 2">
    <original>V</original>
    <variation>I</variation>
    <location>
        <position position="74"/>
    </location>
</feature>
<feature type="sequence conflict" description="In Ref. 1; AAG28417 and 2; BAB33093." evidence="5" ref="1 2">
    <original>MRTSEV</original>
    <variation>RWTSEI</variation>
    <location>
        <begin position="93"/>
        <end position="98"/>
    </location>
</feature>
<feature type="sequence conflict" description="In Ref. 1; AAG28417 and 2; BAB33093." evidence="5" ref="1 2">
    <original>YI</original>
    <variation>LS</variation>
    <location>
        <begin position="133"/>
        <end position="134"/>
    </location>
</feature>
<feature type="sequence conflict" description="In Ref. 1; AAG28417 and 2; BAB33093." evidence="5" ref="1 2">
    <original>VDS</original>
    <variation>FDF</variation>
    <location>
        <begin position="143"/>
        <end position="145"/>
    </location>
</feature>
<feature type="sequence conflict" description="In Ref. 1; AAG28417 and 2; BAB33093." evidence="5" ref="1 2">
    <original>A</original>
    <variation>E</variation>
    <location>
        <position position="165"/>
    </location>
</feature>
<feature type="sequence conflict" description="In Ref. 1; AAG28417." evidence="5" ref="1">
    <original>S</original>
    <variation>L</variation>
    <location>
        <position position="172"/>
    </location>
</feature>
<feature type="sequence conflict" description="In Ref. 1; AAG28417 and 2; BAB33093." evidence="5" ref="1 2">
    <original>M</original>
    <variation>G</variation>
    <location>
        <position position="184"/>
    </location>
</feature>
<feature type="sequence conflict" description="In Ref. 1; AAG28417." evidence="5" ref="1">
    <original>S</original>
    <variation>N</variation>
    <location>
        <position position="191"/>
    </location>
</feature>
<feature type="sequence conflict" description="In Ref. 1; AAG28417." evidence="5" ref="1">
    <original>P</original>
    <variation>L</variation>
    <location>
        <position position="211"/>
    </location>
</feature>
<feature type="sequence conflict" description="In Ref. 1; AAG28417 and 2; BAB33093." evidence="5" ref="1 2">
    <original>L</original>
    <variation>F</variation>
    <location>
        <position position="215"/>
    </location>
</feature>
<feature type="sequence conflict" description="In Ref. 1; AAG28417 and 2; BAB33093." evidence="5" ref="1 2">
    <original>VVLTYST</original>
    <variation>ALLSYSI</variation>
    <location>
        <begin position="218"/>
        <end position="224"/>
    </location>
</feature>
<feature type="sequence conflict" description="In Ref. 1; AAG28417 and 2; BAB33093." evidence="5" ref="1 2">
    <original>LI</original>
    <variation>VT</variation>
    <location>
        <begin position="237"/>
        <end position="238"/>
    </location>
</feature>
<feature type="sequence conflict" description="In Ref. 1; AAG28417 and 2; BAB33093." evidence="5" ref="1 2">
    <original>F</original>
    <variation>V</variation>
    <location>
        <position position="242"/>
    </location>
</feature>
<feature type="sequence conflict" description="In Ref. 1; AAG28417." evidence="5" ref="1">
    <original>H</original>
    <variation>R</variation>
    <location>
        <position position="329"/>
    </location>
</feature>
<feature type="sequence conflict" description="In Ref. 1; AAG28417 and 2; BAB33093." evidence="5" ref="1 2">
    <location>
        <begin position="339"/>
        <end position="348"/>
    </location>
</feature>
<feature type="sequence conflict" description="In Ref. 1; AAG28417." evidence="5" ref="1">
    <original>H</original>
    <variation>R</variation>
    <location>
        <position position="374"/>
    </location>
</feature>
<feature type="sequence conflict" description="In Ref. 2; BAB33093." evidence="5" ref="2">
    <original>QHPHG</original>
    <variation>HHLHR</variation>
    <location>
        <begin position="381"/>
        <end position="385"/>
    </location>
</feature>
<feature type="sequence conflict" description="In Ref. 1; AAG28417." evidence="5" ref="1">
    <original>H</original>
    <variation>R</variation>
    <location>
        <position position="384"/>
    </location>
</feature>
<feature type="sequence conflict" description="In Ref. 1; AAG28417." evidence="5" ref="1">
    <location>
        <begin position="421"/>
        <end position="425"/>
    </location>
</feature>
<feature type="sequence conflict" description="In Ref. 1; AAG28417." evidence="5" ref="1">
    <original>R</original>
    <variation>Q</variation>
    <location>
        <position position="429"/>
    </location>
</feature>
<feature type="sequence conflict" description="In Ref. 2; BAB33093." evidence="5" ref="2">
    <original>I</original>
    <variation>S</variation>
    <location>
        <position position="479"/>
    </location>
</feature>
<feature type="sequence conflict" description="In Ref. 2; BAB33093." evidence="5" ref="2">
    <original>R</original>
    <variation>Q</variation>
    <location>
        <position position="494"/>
    </location>
</feature>
<feature type="sequence conflict" description="In Ref. 2; BAB33093." evidence="5" ref="2">
    <original>G</original>
    <variation>S</variation>
    <location>
        <position position="510"/>
    </location>
</feature>
<protein>
    <recommendedName>
        <fullName>Histidine-rich glycoprotein</fullName>
    </recommendedName>
    <alternativeName>
        <fullName>Histidine-proline-rich glycoprotein</fullName>
        <shortName>HPRG</shortName>
    </alternativeName>
    <alternativeName>
        <fullName>Histidine-rich glycoprotein 1</fullName>
        <shortName>HRG1</shortName>
    </alternativeName>
</protein>
<comment type="function">
    <text evidence="1">Plasma glycoprotein that binds a number of ligands such as heme, heparin, heparan sulfate, thrombospondin, plasminogen, and divalent metal ions. Inhibits rosette formation. Acts as an adapter protein and implicated in regulating many processes such as immune complex and pathogen clearance, cell adhesion, angiogenesis, coagulation and fibrinolysis. Mediates clearance of necrotic cells through enhancing the phagocytosis of necrotic cells in a heparan sulfate-dependent pathway. This process can be regulated by the presence of certain HRG ligands such as heparin and zinc ions. Binds to IgG subclasses of immunoglobins containing kappa and lambda light chains with different affinities regulating their clearance and inhibiting the formation of insoluble immune complexes. Tethers plasminogen to the cell surface. Binds T-cells and alters the cell morphology. Modulates angiogenesis by blocking the CD6-mediated antiangiongenic effect of thrombospondins, THBS1 and THBS2 (By similarity).</text>
</comment>
<comment type="subunit">
    <text evidence="1">Interacts with THBS1 (via the TSP type I repeats); the interaction blocks the antiangiogenic effect of THBS1 with CD36. Interacts with HPSE; the interaction is enhanced at acidic pH, partially inhibits binding of HPSE to cell surface receptors and modulates its enzymatic activity. Interacts (via the HRR domain) with TMP1; the interaction partially mediates the antiangiogenic properties of HRG. Interacts with kappa and lambda light chains of IgG molecules. Interacts with ATP5F1A; the interaction occurs on the surface of T-cells and alters their cell morphology in concert with CONA. Binds IgG molecules containing kappa and lambda light chains and inhibits the formation of insoluble immunoglobulin complexes. Interacts with F12; the interaction, which is enhanced in the presence of zinc ions and inhibited by heparin-binding to HRG, inhibits factor XII autoactivation and contact-initiated coagulation (By similarity). Interacts with PLG (via its Kringle domains); the interaction tethers PLG to the cell surface and enhances its activation. Interacts (via the HRR domain) with TPM1; the interaction appears to contribute to the antiangiogenic properties of the HRR domain. Interacts with THBS2; the interaction blocks the antiangiogenic effect of THBS2 with CD36 (By similarity).</text>
</comment>
<comment type="subcellular location">
    <subcellularLocation>
        <location evidence="4">Secreted</location>
    </subcellularLocation>
</comment>
<comment type="tissue specificity">
    <text evidence="4">Expressed in liver, blood plasma, serum and in platelets. Also present in fibrin clots, wound fluid from acute wounds and chronic leg ulcers.</text>
</comment>
<comment type="domain">
    <text evidence="1">The His-rich (HRR) region contains approximately 12 tandem internal repeats of the 5-residue G[H/P][H/P]PH consensus sequence. HRR binds heparan sulfate and possesses antiangiogenic, antibacterial and antifungal properties through binding Candida cells, and preferentially lysing the ergosterol-containing liposomes at low pH. The tandem repeats also bind divalent metal ions and heme (By similarity).</text>
</comment>
<comment type="domain">
    <text evidence="1">The cystatin domains can also bind heparan sulfate. Binding is enhanced in the presence of zinc ions (By similarity).</text>
</comment>
<comment type="PTM">
    <text evidence="1">N-glycosylated.</text>
</comment>
<comment type="PTM">
    <text evidence="1">Proteolytic cleavage produces several HRG fragments which are mostly disulfide-linked and, therefore, not released. Cleavage by plasmin is inhibited in the presence of heparin, zinc ions or in an acidic environment. Cleavage reduces binding of HRG to heparan sulfate, but enhances the ability of HRG to bind and tether plasminogen to the cell surface. On platelet activation, releases a 33 kDa antiangiogenic peptide which encompasses the HRR. Also cleaved in the C-terminal by plasmin (By similarity).</text>
</comment>
<reference key="1">
    <citation type="journal article" date="2000" name="Immunol. Cell Biol.">
        <title>Murine histidine-rich glycoprotein: cloning, characterization and cellular origin.</title>
        <authorList>
            <person name="Hulett M.D."/>
            <person name="Parish C.R."/>
        </authorList>
    </citation>
    <scope>NUCLEOTIDE SEQUENCE [MRNA]</scope>
    <scope>TISSUE SPECIFICITY</scope>
    <scope>SUBCELLULAR LOCATION</scope>
    <source>
        <strain>Lewis</strain>
    </source>
</reference>
<reference key="2">
    <citation type="submission" date="2001-02" db="EMBL/GenBank/DDBJ databases">
        <title>Molecular diversity of mammalian histidine-rich glycoprotein.</title>
        <authorList>
            <person name="Wakabayashi S."/>
            <person name="Takahashi K."/>
            <person name="Hirokado Y."/>
            <person name="Togo Y."/>
            <person name="Izumi S."/>
            <person name="Ohashi T."/>
            <person name="Sato N."/>
            <person name="Hirata D."/>
            <person name="Tsuchida N."/>
            <person name="Koide T."/>
        </authorList>
    </citation>
    <scope>NUCLEOTIDE SEQUENCE [MRNA]</scope>
    <source>
        <strain>Sprague-Dawley</strain>
        <tissue>Liver</tissue>
    </source>
</reference>
<reference key="3">
    <citation type="journal article" date="2004" name="Genome Res.">
        <title>The status, quality, and expansion of the NIH full-length cDNA project: the Mammalian Gene Collection (MGC).</title>
        <authorList>
            <consortium name="The MGC Project Team"/>
        </authorList>
    </citation>
    <scope>NUCLEOTIDE SEQUENCE [LARGE SCALE MRNA]</scope>
    <source>
        <tissue>Liver</tissue>
    </source>
</reference>
<reference key="4">
    <citation type="journal article" date="2012" name="Nat. Commun.">
        <title>Quantitative maps of protein phosphorylation sites across 14 different rat organs and tissues.</title>
        <authorList>
            <person name="Lundby A."/>
            <person name="Secher A."/>
            <person name="Lage K."/>
            <person name="Nordsborg N.B."/>
            <person name="Dmytriyev A."/>
            <person name="Lundby C."/>
            <person name="Olsen J.V."/>
        </authorList>
    </citation>
    <scope>PHOSPHORYLATION [LARGE SCALE ANALYSIS] AT SER-145 AND SER-438</scope>
    <scope>IDENTIFICATION BY MASS SPECTROMETRY [LARGE SCALE ANALYSIS]</scope>
</reference>
<organism>
    <name type="scientific">Rattus norvegicus</name>
    <name type="common">Rat</name>
    <dbReference type="NCBI Taxonomy" id="10116"/>
    <lineage>
        <taxon>Eukaryota</taxon>
        <taxon>Metazoa</taxon>
        <taxon>Chordata</taxon>
        <taxon>Craniata</taxon>
        <taxon>Vertebrata</taxon>
        <taxon>Euteleostomi</taxon>
        <taxon>Mammalia</taxon>
        <taxon>Eutheria</taxon>
        <taxon>Euarchontoglires</taxon>
        <taxon>Glires</taxon>
        <taxon>Rodentia</taxon>
        <taxon>Myomorpha</taxon>
        <taxon>Muroidea</taxon>
        <taxon>Muridae</taxon>
        <taxon>Murinae</taxon>
        <taxon>Rattus</taxon>
    </lineage>
</organism>